<dbReference type="EC" id="4.6.1.1" evidence="5 6 7 8 9 10 11"/>
<dbReference type="EMBL" id="M80550">
    <property type="protein sequence ID" value="AAA40682.1"/>
    <property type="molecule type" value="mRNA"/>
</dbReference>
<dbReference type="PIR" id="A41541">
    <property type="entry name" value="A41541"/>
</dbReference>
<dbReference type="RefSeq" id="NP_112269.1">
    <property type="nucleotide sequence ID" value="NM_031007.1"/>
</dbReference>
<dbReference type="PDB" id="1AB8">
    <property type="method" value="X-ray"/>
    <property type="resolution" value="2.20 A"/>
    <property type="chains" value="A/B=871-1090"/>
</dbReference>
<dbReference type="PDB" id="1AZS">
    <property type="method" value="X-ray"/>
    <property type="resolution" value="2.30 A"/>
    <property type="chains" value="B=870-1081"/>
</dbReference>
<dbReference type="PDB" id="1CJK">
    <property type="method" value="X-ray"/>
    <property type="resolution" value="3.00 A"/>
    <property type="chains" value="B=870-1081"/>
</dbReference>
<dbReference type="PDB" id="1CJT">
    <property type="method" value="X-ray"/>
    <property type="resolution" value="2.80 A"/>
    <property type="chains" value="B=870-1081"/>
</dbReference>
<dbReference type="PDB" id="1CJU">
    <property type="method" value="X-ray"/>
    <property type="resolution" value="2.80 A"/>
    <property type="chains" value="B=870-1081"/>
</dbReference>
<dbReference type="PDB" id="1CJV">
    <property type="method" value="X-ray"/>
    <property type="resolution" value="3.00 A"/>
    <property type="chains" value="B=870-1081"/>
</dbReference>
<dbReference type="PDB" id="1CS4">
    <property type="method" value="X-ray"/>
    <property type="resolution" value="2.50 A"/>
    <property type="chains" value="B=870-1081"/>
</dbReference>
<dbReference type="PDB" id="1CUL">
    <property type="method" value="X-ray"/>
    <property type="resolution" value="2.40 A"/>
    <property type="chains" value="B=874-1081"/>
</dbReference>
<dbReference type="PDB" id="1TL7">
    <property type="method" value="X-ray"/>
    <property type="resolution" value="2.80 A"/>
    <property type="chains" value="B=870-1081"/>
</dbReference>
<dbReference type="PDB" id="1U0H">
    <property type="method" value="X-ray"/>
    <property type="resolution" value="2.90 A"/>
    <property type="chains" value="B=870-1081"/>
</dbReference>
<dbReference type="PDB" id="2GVD">
    <property type="method" value="X-ray"/>
    <property type="resolution" value="2.90 A"/>
    <property type="chains" value="B=870-1081"/>
</dbReference>
<dbReference type="PDB" id="2GVZ">
    <property type="method" value="X-ray"/>
    <property type="resolution" value="3.27 A"/>
    <property type="chains" value="B=870-1081"/>
</dbReference>
<dbReference type="PDB" id="3C14">
    <property type="method" value="X-ray"/>
    <property type="resolution" value="2.68 A"/>
    <property type="chains" value="B=870-1081"/>
</dbReference>
<dbReference type="PDB" id="3C15">
    <property type="method" value="X-ray"/>
    <property type="resolution" value="2.78 A"/>
    <property type="chains" value="B=870-1081"/>
</dbReference>
<dbReference type="PDB" id="3C16">
    <property type="method" value="X-ray"/>
    <property type="resolution" value="2.87 A"/>
    <property type="chains" value="B=870-1081"/>
</dbReference>
<dbReference type="PDB" id="3G82">
    <property type="method" value="X-ray"/>
    <property type="resolution" value="3.11 A"/>
    <property type="chains" value="B=870-1081"/>
</dbReference>
<dbReference type="PDB" id="3MAA">
    <property type="method" value="X-ray"/>
    <property type="resolution" value="3.00 A"/>
    <property type="chains" value="B=870-1081"/>
</dbReference>
<dbReference type="PDBsum" id="1AB8"/>
<dbReference type="PDBsum" id="1AZS"/>
<dbReference type="PDBsum" id="1CJK"/>
<dbReference type="PDBsum" id="1CJT"/>
<dbReference type="PDBsum" id="1CJU"/>
<dbReference type="PDBsum" id="1CJV"/>
<dbReference type="PDBsum" id="1CS4"/>
<dbReference type="PDBsum" id="1CUL"/>
<dbReference type="PDBsum" id="1TL7"/>
<dbReference type="PDBsum" id="1U0H"/>
<dbReference type="PDBsum" id="2GVD"/>
<dbReference type="PDBsum" id="2GVZ"/>
<dbReference type="PDBsum" id="3C14"/>
<dbReference type="PDBsum" id="3C15"/>
<dbReference type="PDBsum" id="3C16"/>
<dbReference type="PDBsum" id="3G82"/>
<dbReference type="PDBsum" id="3MAA"/>
<dbReference type="SMR" id="P26769"/>
<dbReference type="BioGRID" id="249536">
    <property type="interactions" value="1"/>
</dbReference>
<dbReference type="DIP" id="DIP-164N"/>
<dbReference type="FunCoup" id="P26769">
    <property type="interactions" value="890"/>
</dbReference>
<dbReference type="IntAct" id="P26769">
    <property type="interactions" value="8"/>
</dbReference>
<dbReference type="MINT" id="P26769"/>
<dbReference type="STRING" id="10116.ENSRNOP00000038994"/>
<dbReference type="BindingDB" id="P26769"/>
<dbReference type="ChEMBL" id="CHEMBL2958"/>
<dbReference type="DrugCentral" id="P26769"/>
<dbReference type="GlyCosmos" id="P26769">
    <property type="glycosylation" value="2 sites, No reported glycans"/>
</dbReference>
<dbReference type="GlyGen" id="P26769">
    <property type="glycosylation" value="3 sites"/>
</dbReference>
<dbReference type="iPTMnet" id="P26769"/>
<dbReference type="PhosphoSitePlus" id="P26769"/>
<dbReference type="PaxDb" id="10116-ENSRNOP00000038994"/>
<dbReference type="GeneID" id="81636"/>
<dbReference type="KEGG" id="rno:81636"/>
<dbReference type="UCSC" id="RGD:619965">
    <property type="organism name" value="rat"/>
</dbReference>
<dbReference type="AGR" id="RGD:619965"/>
<dbReference type="CTD" id="108"/>
<dbReference type="RGD" id="619965">
    <property type="gene designation" value="Adcy2"/>
</dbReference>
<dbReference type="eggNOG" id="KOG3619">
    <property type="taxonomic scope" value="Eukaryota"/>
</dbReference>
<dbReference type="InParanoid" id="P26769"/>
<dbReference type="PhylomeDB" id="P26769"/>
<dbReference type="BRENDA" id="4.6.1.1">
    <property type="organism ID" value="5301"/>
</dbReference>
<dbReference type="Reactome" id="R-RNO-163615">
    <property type="pathway name" value="PKA activation"/>
</dbReference>
<dbReference type="Reactome" id="R-RNO-170660">
    <property type="pathway name" value="Adenylate cyclase activating pathway"/>
</dbReference>
<dbReference type="Reactome" id="R-RNO-170670">
    <property type="pathway name" value="Adenylate cyclase inhibitory pathway"/>
</dbReference>
<dbReference type="Reactome" id="R-RNO-418597">
    <property type="pathway name" value="G alpha (z) signalling events"/>
</dbReference>
<dbReference type="Reactome" id="R-RNO-5610787">
    <property type="pathway name" value="Hedgehog 'off' state"/>
</dbReference>
<dbReference type="EvolutionaryTrace" id="P26769"/>
<dbReference type="PRO" id="PR:P26769"/>
<dbReference type="Proteomes" id="UP000002494">
    <property type="component" value="Unplaced"/>
</dbReference>
<dbReference type="GO" id="GO:0005737">
    <property type="term" value="C:cytoplasm"/>
    <property type="evidence" value="ECO:0000266"/>
    <property type="project" value="RGD"/>
</dbReference>
<dbReference type="GO" id="GO:0030425">
    <property type="term" value="C:dendrite"/>
    <property type="evidence" value="ECO:0000250"/>
    <property type="project" value="UniProtKB"/>
</dbReference>
<dbReference type="GO" id="GO:0016020">
    <property type="term" value="C:membrane"/>
    <property type="evidence" value="ECO:0000314"/>
    <property type="project" value="BHF-UCL"/>
</dbReference>
<dbReference type="GO" id="GO:0045121">
    <property type="term" value="C:membrane raft"/>
    <property type="evidence" value="ECO:0000314"/>
    <property type="project" value="BHF-UCL"/>
</dbReference>
<dbReference type="GO" id="GO:0005886">
    <property type="term" value="C:plasma membrane"/>
    <property type="evidence" value="ECO:0000314"/>
    <property type="project" value="UniProtKB"/>
</dbReference>
<dbReference type="GO" id="GO:0032991">
    <property type="term" value="C:protein-containing complex"/>
    <property type="evidence" value="ECO:0000314"/>
    <property type="project" value="RGD"/>
</dbReference>
<dbReference type="GO" id="GO:0004016">
    <property type="term" value="F:adenylate cyclase activity"/>
    <property type="evidence" value="ECO:0000314"/>
    <property type="project" value="UniProtKB"/>
</dbReference>
<dbReference type="GO" id="GO:0008179">
    <property type="term" value="F:adenylate cyclase binding"/>
    <property type="evidence" value="ECO:0000314"/>
    <property type="project" value="BHF-UCL"/>
</dbReference>
<dbReference type="GO" id="GO:0005524">
    <property type="term" value="F:ATP binding"/>
    <property type="evidence" value="ECO:0007669"/>
    <property type="project" value="UniProtKB-KW"/>
</dbReference>
<dbReference type="GO" id="GO:0031683">
    <property type="term" value="F:G-protein beta/gamma-subunit complex binding"/>
    <property type="evidence" value="ECO:0000353"/>
    <property type="project" value="RGD"/>
</dbReference>
<dbReference type="GO" id="GO:0000287">
    <property type="term" value="F:magnesium ion binding"/>
    <property type="evidence" value="ECO:0000314"/>
    <property type="project" value="UniProtKB"/>
</dbReference>
<dbReference type="GO" id="GO:0030145">
    <property type="term" value="F:manganese ion binding"/>
    <property type="evidence" value="ECO:0000314"/>
    <property type="project" value="UniProtKB"/>
</dbReference>
<dbReference type="GO" id="GO:0007189">
    <property type="term" value="P:adenylate cyclase-activating G protein-coupled receptor signaling pathway"/>
    <property type="evidence" value="ECO:0000314"/>
    <property type="project" value="UniProtKB"/>
</dbReference>
<dbReference type="GO" id="GO:0007188">
    <property type="term" value="P:adenylate cyclase-modulating G protein-coupled receptor signaling pathway"/>
    <property type="evidence" value="ECO:0000314"/>
    <property type="project" value="BHF-UCL"/>
</dbReference>
<dbReference type="GO" id="GO:0006171">
    <property type="term" value="P:cAMP biosynthetic process"/>
    <property type="evidence" value="ECO:0000314"/>
    <property type="project" value="UniProtKB"/>
</dbReference>
<dbReference type="GO" id="GO:1904322">
    <property type="term" value="P:cellular response to forskolin"/>
    <property type="evidence" value="ECO:0000314"/>
    <property type="project" value="UniProtKB"/>
</dbReference>
<dbReference type="GO" id="GO:0035556">
    <property type="term" value="P:intracellular signal transduction"/>
    <property type="evidence" value="ECO:0007669"/>
    <property type="project" value="InterPro"/>
</dbReference>
<dbReference type="CDD" id="cd07302">
    <property type="entry name" value="CHD"/>
    <property type="match status" value="2"/>
</dbReference>
<dbReference type="FunFam" id="3.30.70.1230:FF:000003">
    <property type="entry name" value="Adenylate cyclase"/>
    <property type="match status" value="1"/>
</dbReference>
<dbReference type="FunFam" id="3.30.70.1230:FF:000010">
    <property type="entry name" value="Adenylate cyclase 2"/>
    <property type="match status" value="1"/>
</dbReference>
<dbReference type="Gene3D" id="3.30.70.1230">
    <property type="entry name" value="Nucleotide cyclase"/>
    <property type="match status" value="2"/>
</dbReference>
<dbReference type="InterPro" id="IPR001054">
    <property type="entry name" value="A/G_cyclase"/>
</dbReference>
<dbReference type="InterPro" id="IPR018297">
    <property type="entry name" value="A/G_cyclase_CS"/>
</dbReference>
<dbReference type="InterPro" id="IPR032628">
    <property type="entry name" value="AC_N"/>
</dbReference>
<dbReference type="InterPro" id="IPR030672">
    <property type="entry name" value="Adcy"/>
</dbReference>
<dbReference type="InterPro" id="IPR009398">
    <property type="entry name" value="Adcy_conserved_dom"/>
</dbReference>
<dbReference type="InterPro" id="IPR029787">
    <property type="entry name" value="Nucleotide_cyclase"/>
</dbReference>
<dbReference type="PANTHER" id="PTHR45627">
    <property type="entry name" value="ADENYLATE CYCLASE TYPE 1"/>
    <property type="match status" value="1"/>
</dbReference>
<dbReference type="PANTHER" id="PTHR45627:SF6">
    <property type="entry name" value="ADENYLATE CYCLASE TYPE 2"/>
    <property type="match status" value="1"/>
</dbReference>
<dbReference type="Pfam" id="PF16214">
    <property type="entry name" value="AC_N"/>
    <property type="match status" value="1"/>
</dbReference>
<dbReference type="Pfam" id="PF06327">
    <property type="entry name" value="Adcy_cons_dom"/>
    <property type="match status" value="1"/>
</dbReference>
<dbReference type="Pfam" id="PF00211">
    <property type="entry name" value="Guanylate_cyc"/>
    <property type="match status" value="2"/>
</dbReference>
<dbReference type="PIRSF" id="PIRSF039050">
    <property type="entry name" value="Ade_cyc"/>
    <property type="match status" value="1"/>
</dbReference>
<dbReference type="SMART" id="SM00044">
    <property type="entry name" value="CYCc"/>
    <property type="match status" value="2"/>
</dbReference>
<dbReference type="SUPFAM" id="SSF55073">
    <property type="entry name" value="Nucleotide cyclase"/>
    <property type="match status" value="2"/>
</dbReference>
<dbReference type="PROSITE" id="PS00452">
    <property type="entry name" value="GUANYLATE_CYCLASE_1"/>
    <property type="match status" value="2"/>
</dbReference>
<dbReference type="PROSITE" id="PS50125">
    <property type="entry name" value="GUANYLATE_CYCLASE_2"/>
    <property type="match status" value="2"/>
</dbReference>
<proteinExistence type="evidence at protein level"/>
<sequence>MRRRRYLRDRAEAAAAAAAGGGEGLQRSRDWLYESYYCMSQQHPLIVFLLLIVMGACLALLAVFFALGLEVEDHVAFLITVPTALAIFFAIFILVCIESVFKKLLRVFSLVIWICLVAMGYLFMCFGGTVSAWDQVSFFLFIIFVVYTMLPFNMRDAIIASILTSSSHTIVLSVYLSATPGAKEHLFWQILANVIIFICGNLAGAYHKHLMELALQQTYRDTCNCIKSRIKLEFEKRQQERLLLSLLPAHIAMEMKAEIIQRLQGPKAGQMENTNNFHNLYVKRHTNVSILYADIVGFTRLASDCSPGELVHMLNELFGKFDQIAKENECMRIKILGDCYYCVSGLPISLPNHAKNCVKMGLDMCEAIKKVRDATGVDINMRVGVHSGNVLCGVIGLQKWQYDVWSHDVTLANHMEAGGVPGRVHISSVTLEHLNGAYKVEEGDGEIRDPYLKQHLVKTYFVINPKGERRSPQHLFRPRHTLDGAKMRASVRMTRYLESWGAAKPFAHLHHRDSMTTENGKISTTDVPMGQHNFQNRTLRTKSQKKRFEEELNERMIQAIDGINAQKQWLKSEDIQRISLLFYNKNIEKEYRATALPAFKYYVTCACLIFLCIFIVQILVLPKTSILGFSFGAAFLSLIFILFVCFAGQLLQCSKKASTSLMWLLKSSGIIANRPWPRISLTIVTTAIILTMAVFNMFFLSNSEETTLPTANTSNANVSVPDNQASILHARNLFFLPYFIYSCILGLISCSVFLRVNYELKMLIMMVALVGYNTILLHTHAHVLDAYSQVLFQRPGIWKDLKTMGSVSLSIFFITLLVLGRQSEYYCRLDFLWKNKFKKEREEIETMENLNRVLLENVLPAHVAEHFLARSLKNEELYHQSYDCVCVMFASIPDFKEFYTESDVNKEGLECLRLLNEIIADFDDLLSKPKFSGVEKIKTIGSTYMAATGLSAIPSQEHAQEPERQYMHIGTMVEFAYALVGKLDAINKHSFNDFKLRVGINHGPVIAGVIGAQKPQYDIWGNTVNVASRMDSTGVLDKIQVTEETSLILQTLGYTCTCRGIINVKGKGDLKTYFVNTEMSRSLSQSNLAS</sequence>
<protein>
    <recommendedName>
        <fullName>Adenylate cyclase type 2</fullName>
        <ecNumber evidence="5 6 7 8 9 10 11">4.6.1.1</ecNumber>
    </recommendedName>
    <alternativeName>
        <fullName>ATP pyrophosphate-lyase 2</fullName>
    </alternativeName>
    <alternativeName>
        <fullName>Adenylate cyclase type II</fullName>
    </alternativeName>
    <alternativeName>
        <fullName>Adenylyl cyclase 2</fullName>
        <shortName evidence="16">AC2</shortName>
    </alternativeName>
</protein>
<reference key="1">
    <citation type="journal article" date="1991" name="Proc. Natl. Acad. Sci. U.S.A.">
        <title>Molecular cloning and characterization of a Ca2+/calmodulin-insensitive adenylyl cyclase from rat brain.</title>
        <authorList>
            <person name="Feinstein P.G."/>
            <person name="Schrader K.A."/>
            <person name="Bakalyar H.A."/>
            <person name="Tang W.J."/>
            <person name="Krupinski J."/>
            <person name="Gilman A.G."/>
            <person name="Reed R.R."/>
        </authorList>
    </citation>
    <scope>NUCLEOTIDE SEQUENCE [MRNA]</scope>
    <scope>FUNCTION</scope>
    <scope>CATALYTIC ACTIVITY</scope>
    <scope>COFACTOR</scope>
    <scope>ACTIVITY REGULATION</scope>
    <scope>SUBCELLULAR LOCATION</scope>
    <scope>TISSUE SPECIFICITY</scope>
    <source>
        <tissue>Brain</tissue>
    </source>
</reference>
<reference key="2">
    <citation type="journal article" date="1995" name="Science">
        <title>A region of adenylyl cyclase 2 critical for regulation by G protein beta gamma subunits.</title>
        <authorList>
            <person name="Chen J."/>
            <person name="DeVivo M."/>
            <person name="Dingus J."/>
            <person name="Harry A."/>
            <person name="Li J."/>
            <person name="Sui J."/>
            <person name="Carty D.J."/>
            <person name="Blank J.L."/>
            <person name="Exton J.H."/>
            <person name="Stoffel R.H."/>
        </authorList>
    </citation>
    <scope>FUNCTION</scope>
    <scope>CATALYTIC ACTIVITY</scope>
    <scope>COFACTOR</scope>
    <scope>ACTIVITY REGULATION</scope>
    <scope>SUBCELLULAR LOCATION</scope>
</reference>
<reference key="3">
    <citation type="journal article" date="2011" name="Cell. Signal.">
        <title>Identification of new Gbetagamma interaction sites in adenylyl cyclase 2.</title>
        <authorList>
            <person name="Boran A.D."/>
            <person name="Chen Y."/>
            <person name="Iyengar R."/>
        </authorList>
    </citation>
    <scope>FUNCTION</scope>
    <scope>CATALYTIC ACTIVITY</scope>
    <scope>ACTIVITY REGULATION</scope>
    <scope>SUBCELLULAR LOCATION</scope>
    <scope>INTERACTION WITH THE G PROTEIN BETA AND GAMMA SUBUNIT COMPLEX</scope>
</reference>
<reference key="4">
    <citation type="journal article" date="2012" name="Biochem. J.">
        <title>Muscarinic receptors stimulate AC2 by novel phosphorylation sites, whereas Gbetagamma subunits exert opposing effects depending on the G-protein source.</title>
        <authorList>
            <person name="Shen J.X."/>
            <person name="Wachten S."/>
            <person name="Halls M.L."/>
            <person name="Everett K.L."/>
            <person name="Cooper D.M."/>
        </authorList>
    </citation>
    <scope>PHOSPHORYLATION AT SER-490 AND SER-543</scope>
    <scope>MUTAGENESIS OF SER-490 AND SER-543</scope>
    <scope>CATALYTIC ACTIVITY</scope>
    <scope>FUNCTION</scope>
    <scope>SUBCELLULAR LOCATION</scope>
    <scope>ACTIVITY REGULATION</scope>
</reference>
<reference key="5">
    <citation type="journal article" date="2012" name="Nat. Commun.">
        <title>Quantitative maps of protein phosphorylation sites across 14 different rat organs and tissues.</title>
        <authorList>
            <person name="Lundby A."/>
            <person name="Secher A."/>
            <person name="Lage K."/>
            <person name="Nordsborg N.B."/>
            <person name="Dmytriyev A."/>
            <person name="Lundby C."/>
            <person name="Olsen J.V."/>
        </authorList>
    </citation>
    <scope>IDENTIFICATION BY MASS SPECTROMETRY [LARGE SCALE ANALYSIS]</scope>
</reference>
<reference key="6">
    <citation type="journal article" date="2014" name="Naunyn Schmiedebergs Arch. Pharmacol.">
        <title>Non-raft adenylyl cyclase 2 defines a cAMP signaling compartment that selectively regulates IL-6 expression in airway smooth muscle cells: differential regulation of gene expression by AC isoforms.</title>
        <authorList>
            <person name="Bogard A.S."/>
            <person name="Birg A.V."/>
            <person name="Ostrom R.S."/>
        </authorList>
    </citation>
    <scope>FUNCTION</scope>
    <scope>CATALYTIC ACTIVITY</scope>
    <scope>ACTIVITY REGULATION</scope>
</reference>
<reference key="7">
    <citation type="journal article" date="1997" name="Nature">
        <title>Structure of the adenylyl cyclase catalytic core.</title>
        <authorList>
            <person name="Zhang G."/>
            <person name="Liu Y."/>
            <person name="Ruoho A.E."/>
            <person name="Hurley J.H."/>
        </authorList>
    </citation>
    <scope>X-RAY CRYSTALLOGRAPHY (2.2 ANGSTROMS) OF 871-1090 IN COMPLEX WITH FORSKOLIN</scope>
</reference>
<reference key="8">
    <citation type="journal article" date="1997" name="Nature">
        <authorList>
            <person name="Zhang G."/>
            <person name="Liu Y."/>
            <person name="Ruoho A.E."/>
            <person name="Hurley J.H."/>
        </authorList>
    </citation>
    <scope>ERRATUM OF PUBMED:9069282</scope>
</reference>
<reference key="9">
    <citation type="journal article" date="1997" name="Science">
        <title>Crystal structure of the catalytic domains of adenylyl cyclase in a complex with Gsalpha.GTPgammaS.</title>
        <authorList>
            <person name="Tesmer J.J.G."/>
            <person name="Sunahara R.K."/>
            <person name="Gilman A.G."/>
            <person name="Sprang S.R."/>
        </authorList>
    </citation>
    <scope>X-RAY CRYSTALLOGRAPHY (2.3 ANGSTROMS) OF 870-1081 OF CHIMERA WITH ADCY5 IN COMPLEX WITH GNAS</scope>
    <scope>INTERACTION WITH GNAS</scope>
    <scope>DOMAIN</scope>
</reference>
<reference key="10">
    <citation type="journal article" date="1999" name="Science">
        <title>Two-metal-ion catalysis in adenylyl cyclase.</title>
        <authorList>
            <person name="Tesmer J.J.G."/>
            <person name="Sunahara R.K."/>
            <person name="Johnson R.A."/>
            <person name="Gosselin G."/>
            <person name="Gilman A.G."/>
            <person name="Sprang S.R."/>
        </authorList>
    </citation>
    <scope>X-RAY CRYSTALLOGRAPHY (2.8 ANGSTROMS) OF 870-1081 OF CHIMERA WITH ADCY5 IN COMPLEX WITH GNAS AND ATP ANALOGS</scope>
    <scope>INTERACTION WITH GNAS</scope>
    <scope>DOMAIN</scope>
    <scope>CATALYTIC ACTIVITY</scope>
    <scope>FUNCTION</scope>
    <scope>COFACTOR</scope>
</reference>
<reference evidence="24 25" key="11">
    <citation type="journal article" date="2000" name="Biochemistry">
        <title>Molecular basis for P-site inhibition of adenylyl cyclase.</title>
        <authorList>
            <person name="Tesmer J.J."/>
            <person name="Dessauer C.W."/>
            <person name="Sunahara R.K."/>
            <person name="Murray L.D."/>
            <person name="Johnson R.A."/>
            <person name="Gilman A.G."/>
            <person name="Sprang S.R."/>
        </authorList>
    </citation>
    <scope>X-RAY CRYSTALLOGRAPHY (2.40 ANGSTROMS) OF 874-1081 OF CHIMERA WITH ADCY5 IN COMPLEX WITH GNAS; MAGNESIUM AND ATP ANALOGS</scope>
    <scope>INTERACTION WITH GNAS</scope>
    <scope>DOMAIN</scope>
    <scope>FUNCTION</scope>
    <scope>CATALYTIC ACTIVITY</scope>
    <scope>COFACTOR</scope>
</reference>
<reference evidence="26 27" key="12">
    <citation type="journal article" date="2005" name="J. Biol. Chem.">
        <title>Structural basis for the inhibition of mammalian membrane adenylyl cyclase by 2 '(3')-O-(N-Methylanthraniloyl)-guanosine 5 '-triphosphate.</title>
        <authorList>
            <person name="Mou T.C."/>
            <person name="Gille A."/>
            <person name="Fancy D.A."/>
            <person name="Seifert R."/>
            <person name="Sprang S.R."/>
        </authorList>
    </citation>
    <scope>X-RAY CRYSTALLOGRAPHY (2.80 ANGSTROMS) OF 870-1081 OF CHIMERA WITH ADCY5 IN COMPLEX WITH GNAS AND ATP ANALOG</scope>
    <scope>FUNCTION</scope>
    <scope>CATALYTIC ACTIVITY</scope>
    <scope>INTERACTION WITH GNAS</scope>
    <scope>DOMAIN</scope>
</reference>
<reference evidence="28 29" key="13">
    <citation type="journal article" date="2006" name="Mol. Pharmacol.">
        <title>Broad specificity of mammalian adenylyl cyclase for interaction with 2',3'-substituted purine- and pyrimidine nucleotide inhibitors.</title>
        <authorList>
            <person name="Mou T.C."/>
            <person name="Gille A."/>
            <person name="Suryanarayana S."/>
            <person name="Richter M."/>
            <person name="Seifert R."/>
            <person name="Sprang S.R."/>
        </authorList>
    </citation>
    <scope>X-RAY CRYSTALLOGRAPHY (2.90 ANGSTROMS) OF 870-1081 OF CHIMERA WITH ADCY5 IN COMPLEX WITH GNAS AND ATP ANALOG</scope>
    <scope>FUNCTION</scope>
    <scope>CATALYTIC ACTIVITY</scope>
    <scope>COFACTOR</scope>
    <scope>INTERACTION WITH GNAS</scope>
    <scope>DOMAIN</scope>
</reference>
<reference evidence="30 31 32 33" key="14">
    <citation type="journal article" date="2009" name="Biochemistry">
        <title>Structural basis for inhibition of mammalian adenylyl cyclase by calcium.</title>
        <authorList>
            <person name="Mou T.C."/>
            <person name="Masada N."/>
            <person name="Cooper D.M."/>
            <person name="Sprang S.R."/>
        </authorList>
    </citation>
    <scope>X-RAY CRYSTALLOGRAPHY (2.68 ANGSTROMS) OF 870-1081 OF CHIMERA WITH ADCY5 IN COMPLEX WITH GNAS; FORSKOLIN; MAGNESIUM IONS AND ATP ANALOG</scope>
    <scope>FUNCTION</scope>
    <scope>CATALYTIC ACTIVITY</scope>
    <scope>COFACTOR</scope>
    <scope>INTERACTION WITH GNAS</scope>
    <scope>DOMAIN</scope>
</reference>
<accession>P26769</accession>
<organism>
    <name type="scientific">Rattus norvegicus</name>
    <name type="common">Rat</name>
    <dbReference type="NCBI Taxonomy" id="10116"/>
    <lineage>
        <taxon>Eukaryota</taxon>
        <taxon>Metazoa</taxon>
        <taxon>Chordata</taxon>
        <taxon>Craniata</taxon>
        <taxon>Vertebrata</taxon>
        <taxon>Euteleostomi</taxon>
        <taxon>Mammalia</taxon>
        <taxon>Eutheria</taxon>
        <taxon>Euarchontoglires</taxon>
        <taxon>Glires</taxon>
        <taxon>Rodentia</taxon>
        <taxon>Myomorpha</taxon>
        <taxon>Muroidea</taxon>
        <taxon>Muridae</taxon>
        <taxon>Murinae</taxon>
        <taxon>Rattus</taxon>
    </lineage>
</organism>
<keyword id="KW-0002">3D-structure</keyword>
<keyword id="KW-0067">ATP-binding</keyword>
<keyword id="KW-0115">cAMP biosynthesis</keyword>
<keyword id="KW-1003">Cell membrane</keyword>
<keyword id="KW-0963">Cytoplasm</keyword>
<keyword id="KW-0325">Glycoprotein</keyword>
<keyword id="KW-0456">Lyase</keyword>
<keyword id="KW-0460">Magnesium</keyword>
<keyword id="KW-0464">Manganese</keyword>
<keyword id="KW-0472">Membrane</keyword>
<keyword id="KW-0479">Metal-binding</keyword>
<keyword id="KW-0547">Nucleotide-binding</keyword>
<keyword id="KW-0597">Phosphoprotein</keyword>
<keyword id="KW-1185">Reference proteome</keyword>
<keyword id="KW-0677">Repeat</keyword>
<keyword id="KW-0812">Transmembrane</keyword>
<keyword id="KW-1133">Transmembrane helix</keyword>
<gene>
    <name type="primary">Adcy2</name>
</gene>
<comment type="function">
    <text evidence="5 6 7 8 9 10 11 12 13 14">Catalyzes the formation of the signaling molecule cAMP in response to G-protein signaling (PubMed:10427002, PubMed:11087399, PubMed:15591060, PubMed:16766715, PubMed:1719547, PubMed:19243146, PubMed:21596131, PubMed:22906005, PubMed:24363043, PubMed:7761832). Down-stream signaling cascades mediate changes in gene expression patterns and lead to increased IL6 production (PubMed:24363043). Functions in signaling cascades downstream of the muscarinic acetylcholine receptors (PubMed:22906005).</text>
</comment>
<comment type="catalytic activity">
    <reaction evidence="5 6 7 8 9 10 11 12 13 14">
        <text>ATP = 3',5'-cyclic AMP + diphosphate</text>
        <dbReference type="Rhea" id="RHEA:15389"/>
        <dbReference type="ChEBI" id="CHEBI:30616"/>
        <dbReference type="ChEBI" id="CHEBI:33019"/>
        <dbReference type="ChEBI" id="CHEBI:58165"/>
        <dbReference type="EC" id="4.6.1.1"/>
    </reaction>
</comment>
<comment type="cofactor">
    <cofactor evidence="5 6 8 9 10 14">
        <name>Mg(2+)</name>
        <dbReference type="ChEBI" id="CHEBI:18420"/>
    </cofactor>
    <cofactor evidence="5 6 8">
        <name>Mn(2+)</name>
        <dbReference type="ChEBI" id="CHEBI:29035"/>
    </cofactor>
    <text evidence="8 18">Binds 2 magnesium ions per subunit. Is also active with manganese (in vitro).</text>
</comment>
<comment type="activity regulation">
    <text evidence="2 9 11 12 13 14">Activated by forskolin (PubMed:1719547, PubMed:22906005, PubMed:24363043). Is not activated by calmodulin (PubMed:1719547). Inhibited by calcium ions, already at micromolar concentration. Activated by the G protein alpha subunit GNAS (PubMed:1719547, PubMed:21596131, PubMed:7761832). Activated by the G protein beta and gamma subunit complex (PubMed:21596131, PubMed:22906005, PubMed:7761832). Phosphorylation by RAF1 results in its activation (By similarity). Phosphorylation by PKC activates the enzyme (PubMed:22906005).</text>
</comment>
<comment type="subunit">
    <text evidence="2 5 6 7 8 10 11 15">Interacts with RAF1 (By similarity). Interacts with GNAS (PubMed:10427002, PubMed:11087399, PubMed:15591060, PubMed:16766715, PubMed:19243146, PubMed:9417641). Interacts with the G protein beta and gamma subunit complex (PubMed:21596131).</text>
</comment>
<comment type="interaction">
    <interactant intactId="EBI-1027877">
        <id>P26769</id>
    </interactant>
    <interactant intactId="EBI-15676518">
        <id>Q99996-4</id>
        <label>AKAP9</label>
    </interactant>
    <organismsDiffer>true</organismsDiffer>
    <experiments>3</experiments>
</comment>
<comment type="interaction">
    <interactant intactId="EBI-1027877">
        <id>P26769</id>
    </interactant>
    <interactant intactId="EBI-8095525">
        <id>Q08499-2</id>
        <label>PDE4D</label>
    </interactant>
    <organismsDiffer>true</organismsDiffer>
    <experiments>3</experiments>
</comment>
<comment type="subcellular location">
    <subcellularLocation>
        <location evidence="9 12">Membrane</location>
        <topology evidence="17">Multi-pass membrane protein</topology>
    </subcellularLocation>
    <subcellularLocation>
        <location evidence="9 14">Cell membrane</location>
        <topology evidence="17">Multi-pass membrane protein</topology>
    </subcellularLocation>
    <subcellularLocation>
        <location evidence="2">Cytoplasm</location>
    </subcellularLocation>
</comment>
<comment type="tissue specificity">
    <text evidence="9">Expressed in brain, olfactory epithelium and lung.</text>
</comment>
<comment type="domain">
    <text evidence="5 6 7 8 10 15">The protein contains two modules with six transmembrane helices each; both are required for catalytic activity. Isolated N-terminal or C-terminal guanylate cyclase domains have no catalytic activity, but when they are brought together, enzyme activity is restored. The active site is at the interface of the two domains. Both contribute substrate-binding residues, but the catalytic metal ions are bound exclusively via the N-terminal guanylate cyclase domain.</text>
</comment>
<comment type="PTM">
    <text evidence="2">Phosphorylated by RAF1 (By similarity).</text>
</comment>
<comment type="similarity">
    <text evidence="4">Belongs to the adenylyl cyclase class-4/guanylyl cyclase family.</text>
</comment>
<name>ADCY2_RAT</name>
<feature type="chain" id="PRO_0000195686" description="Adenylate cyclase type 2">
    <location>
        <begin position="1"/>
        <end position="1090"/>
    </location>
</feature>
<feature type="topological domain" description="Cytoplasmic" evidence="3">
    <location>
        <begin position="1"/>
        <end position="44"/>
    </location>
</feature>
<feature type="transmembrane region" description="Helical" evidence="3">
    <location>
        <begin position="45"/>
        <end position="65"/>
    </location>
</feature>
<feature type="transmembrane region" description="Helical" evidence="3">
    <location>
        <begin position="75"/>
        <end position="95"/>
    </location>
</feature>
<feature type="transmembrane region" description="Helical" evidence="3">
    <location>
        <begin position="107"/>
        <end position="127"/>
    </location>
</feature>
<feature type="transmembrane region" description="Helical" evidence="3">
    <location>
        <begin position="132"/>
        <end position="152"/>
    </location>
</feature>
<feature type="transmembrane region" description="Helical" evidence="3">
    <location>
        <begin position="157"/>
        <end position="177"/>
    </location>
</feature>
<feature type="transmembrane region" description="Helical" evidence="3">
    <location>
        <begin position="186"/>
        <end position="206"/>
    </location>
</feature>
<feature type="topological domain" description="Cytoplasmic" evidence="3">
    <location>
        <begin position="207"/>
        <end position="600"/>
    </location>
</feature>
<feature type="transmembrane region" description="Helical" evidence="3">
    <location>
        <begin position="601"/>
        <end position="621"/>
    </location>
</feature>
<feature type="transmembrane region" description="Helical" evidence="3">
    <location>
        <begin position="626"/>
        <end position="646"/>
    </location>
</feature>
<feature type="transmembrane region" description="Helical" evidence="3">
    <location>
        <begin position="679"/>
        <end position="699"/>
    </location>
</feature>
<feature type="transmembrane region" description="Helical" evidence="3">
    <location>
        <begin position="734"/>
        <end position="754"/>
    </location>
</feature>
<feature type="transmembrane region" description="Helical" evidence="3">
    <location>
        <begin position="763"/>
        <end position="783"/>
    </location>
</feature>
<feature type="transmembrane region" description="Helical" evidence="3">
    <location>
        <begin position="800"/>
        <end position="820"/>
    </location>
</feature>
<feature type="topological domain" description="Cytoplasmic" evidence="3 17">
    <location>
        <begin position="821"/>
        <end position="1090"/>
    </location>
</feature>
<feature type="region of interest" description="Interaction with GNAS" evidence="6">
    <location>
        <begin position="904"/>
        <end position="921"/>
    </location>
</feature>
<feature type="region of interest" description="Interaction with GNAS" evidence="6">
    <location>
        <begin position="989"/>
        <end position="992"/>
    </location>
</feature>
<feature type="binding site" evidence="1">
    <location>
        <begin position="294"/>
        <end position="299"/>
    </location>
    <ligand>
        <name>ATP</name>
        <dbReference type="ChEBI" id="CHEBI:30616"/>
    </ligand>
</feature>
<feature type="binding site" evidence="4 17">
    <location>
        <position position="294"/>
    </location>
    <ligand>
        <name>Mg(2+)</name>
        <dbReference type="ChEBI" id="CHEBI:18420"/>
        <label>1</label>
        <note>catalytic</note>
    </ligand>
</feature>
<feature type="binding site" evidence="4 6 17">
    <location>
        <position position="294"/>
    </location>
    <ligand>
        <name>Mg(2+)</name>
        <dbReference type="ChEBI" id="CHEBI:18420"/>
        <label>2</label>
        <note>catalytic</note>
    </ligand>
</feature>
<feature type="binding site" evidence="4 6 17">
    <location>
        <position position="295"/>
    </location>
    <ligand>
        <name>Mg(2+)</name>
        <dbReference type="ChEBI" id="CHEBI:18420"/>
        <label>2</label>
        <note>catalytic</note>
    </ligand>
</feature>
<feature type="binding site" evidence="1">
    <location>
        <begin position="336"/>
        <end position="338"/>
    </location>
    <ligand>
        <name>ATP</name>
        <dbReference type="ChEBI" id="CHEBI:30616"/>
    </ligand>
</feature>
<feature type="binding site" evidence="4 17">
    <location>
        <position position="338"/>
    </location>
    <ligand>
        <name>Mg(2+)</name>
        <dbReference type="ChEBI" id="CHEBI:18420"/>
        <label>1</label>
        <note>catalytic</note>
    </ligand>
</feature>
<feature type="binding site" evidence="4 6 17">
    <location>
        <position position="338"/>
    </location>
    <ligand>
        <name>Mg(2+)</name>
        <dbReference type="ChEBI" id="CHEBI:18420"/>
        <label>2</label>
        <note>catalytic</note>
    </ligand>
</feature>
<feature type="binding site" evidence="1">
    <location>
        <position position="382"/>
    </location>
    <ligand>
        <name>ATP</name>
        <dbReference type="ChEBI" id="CHEBI:30616"/>
    </ligand>
</feature>
<feature type="binding site" evidence="18 19 20 21 22">
    <location>
        <position position="938"/>
    </location>
    <ligand>
        <name>ATP</name>
        <dbReference type="ChEBI" id="CHEBI:30616"/>
    </ligand>
</feature>
<feature type="binding site" evidence="18 19 20 21 22">
    <location>
        <begin position="1018"/>
        <end position="1020"/>
    </location>
    <ligand>
        <name>ATP</name>
        <dbReference type="ChEBI" id="CHEBI:30616"/>
    </ligand>
</feature>
<feature type="binding site" evidence="5 23 33">
    <location>
        <begin position="1025"/>
        <end position="1029"/>
    </location>
    <ligand>
        <name>ATP</name>
        <dbReference type="ChEBI" id="CHEBI:30616"/>
    </ligand>
</feature>
<feature type="binding site" evidence="18 19 20 21 22">
    <location>
        <position position="1065"/>
    </location>
    <ligand>
        <name>ATP</name>
        <dbReference type="ChEBI" id="CHEBI:30616"/>
    </ligand>
</feature>
<feature type="modified residue" description="Phosphoserine; by PKC" evidence="12">
    <location>
        <position position="490"/>
    </location>
</feature>
<feature type="modified residue" description="Phosphoserine; by PKC" evidence="12">
    <location>
        <position position="543"/>
    </location>
</feature>
<feature type="glycosylation site" description="N-linked (GlcNAc...) asparagine" evidence="3">
    <location>
        <position position="712"/>
    </location>
</feature>
<feature type="glycosylation site" description="N-linked (GlcNAc...) asparagine" evidence="3">
    <location>
        <position position="717"/>
    </location>
</feature>
<feature type="mutagenesis site" description="Reduces activation by PKC. Abolishes activation by PKC; when associated with A-543." evidence="12">
    <original>S</original>
    <variation>A</variation>
    <location>
        <position position="490"/>
    </location>
</feature>
<feature type="mutagenesis site" description="Increases basal level of enzyme activity. Abolishes activation by PKC; when associated with D-543." evidence="12">
    <original>S</original>
    <variation>D</variation>
    <location>
        <position position="490"/>
    </location>
</feature>
<feature type="mutagenesis site" description="Reduces activation by PKC. Abolishes activation by PKC; when associated with A-490." evidence="12">
    <original>S</original>
    <variation>A</variation>
    <location>
        <position position="543"/>
    </location>
</feature>
<feature type="mutagenesis site" description="Increases basal level of enzyme activity. Abolishes activation by PKC; when associated with D-490." evidence="12">
    <original>S</original>
    <variation>D</variation>
    <location>
        <position position="543"/>
    </location>
</feature>
<feature type="strand" evidence="34">
    <location>
        <begin position="879"/>
        <end position="891"/>
    </location>
</feature>
<feature type="helix" evidence="34">
    <location>
        <begin position="895"/>
        <end position="898"/>
    </location>
</feature>
<feature type="turn" evidence="34">
    <location>
        <begin position="903"/>
        <end position="908"/>
    </location>
</feature>
<feature type="helix" evidence="34">
    <location>
        <begin position="909"/>
        <end position="923"/>
    </location>
</feature>
<feature type="helix" evidence="34">
    <location>
        <begin position="924"/>
        <end position="927"/>
    </location>
</feature>
<feature type="helix" evidence="34">
    <location>
        <begin position="929"/>
        <end position="931"/>
    </location>
</feature>
<feature type="strand" evidence="34">
    <location>
        <begin position="934"/>
        <end position="940"/>
    </location>
</feature>
<feature type="strand" evidence="34">
    <location>
        <begin position="943"/>
        <end position="948"/>
    </location>
</feature>
<feature type="helix" evidence="34">
    <location>
        <begin position="967"/>
        <end position="987"/>
    </location>
</feature>
<feature type="turn" evidence="34">
    <location>
        <begin position="988"/>
        <end position="991"/>
    </location>
</feature>
<feature type="strand" evidence="34">
    <location>
        <begin position="997"/>
        <end position="1010"/>
    </location>
</feature>
<feature type="strand" evidence="34">
    <location>
        <begin position="1012"/>
        <end position="1014"/>
    </location>
</feature>
<feature type="strand" evidence="34">
    <location>
        <begin position="1016"/>
        <end position="1021"/>
    </location>
</feature>
<feature type="helix" evidence="34">
    <location>
        <begin position="1022"/>
        <end position="1032"/>
    </location>
</feature>
<feature type="strand" evidence="34">
    <location>
        <begin position="1039"/>
        <end position="1041"/>
    </location>
</feature>
<feature type="helix" evidence="34">
    <location>
        <begin position="1043"/>
        <end position="1052"/>
    </location>
</feature>
<feature type="strand" evidence="35">
    <location>
        <begin position="1056"/>
        <end position="1064"/>
    </location>
</feature>
<feature type="turn" evidence="35">
    <location>
        <begin position="1065"/>
        <end position="1067"/>
    </location>
</feature>
<feature type="strand" evidence="35">
    <location>
        <begin position="1068"/>
        <end position="1075"/>
    </location>
</feature>
<evidence type="ECO:0000250" key="1">
    <source>
        <dbReference type="UniProtKB" id="P30803"/>
    </source>
</evidence>
<evidence type="ECO:0000250" key="2">
    <source>
        <dbReference type="UniProtKB" id="Q08462"/>
    </source>
</evidence>
<evidence type="ECO:0000255" key="3"/>
<evidence type="ECO:0000255" key="4">
    <source>
        <dbReference type="PROSITE-ProRule" id="PRU00099"/>
    </source>
</evidence>
<evidence type="ECO:0000269" key="5">
    <source>
    </source>
</evidence>
<evidence type="ECO:0000269" key="6">
    <source>
    </source>
</evidence>
<evidence type="ECO:0000269" key="7">
    <source>
    </source>
</evidence>
<evidence type="ECO:0000269" key="8">
    <source>
    </source>
</evidence>
<evidence type="ECO:0000269" key="9">
    <source>
    </source>
</evidence>
<evidence type="ECO:0000269" key="10">
    <source>
    </source>
</evidence>
<evidence type="ECO:0000269" key="11">
    <source>
    </source>
</evidence>
<evidence type="ECO:0000269" key="12">
    <source>
    </source>
</evidence>
<evidence type="ECO:0000269" key="13">
    <source>
    </source>
</evidence>
<evidence type="ECO:0000269" key="14">
    <source>
    </source>
</evidence>
<evidence type="ECO:0000269" key="15">
    <source>
    </source>
</evidence>
<evidence type="ECO:0000303" key="16">
    <source>
    </source>
</evidence>
<evidence type="ECO:0000305" key="17"/>
<evidence type="ECO:0000305" key="18">
    <source>
    </source>
</evidence>
<evidence type="ECO:0000305" key="19">
    <source>
    </source>
</evidence>
<evidence type="ECO:0000305" key="20">
    <source>
    </source>
</evidence>
<evidence type="ECO:0000305" key="21">
    <source>
    </source>
</evidence>
<evidence type="ECO:0000305" key="22">
    <source>
    </source>
</evidence>
<evidence type="ECO:0007744" key="23">
    <source>
        <dbReference type="PDB" id="1CJK"/>
    </source>
</evidence>
<evidence type="ECO:0007744" key="24">
    <source>
        <dbReference type="PDB" id="1CS4"/>
    </source>
</evidence>
<evidence type="ECO:0007744" key="25">
    <source>
        <dbReference type="PDB" id="1CUL"/>
    </source>
</evidence>
<evidence type="ECO:0007744" key="26">
    <source>
        <dbReference type="PDB" id="1TL7"/>
    </source>
</evidence>
<evidence type="ECO:0007744" key="27">
    <source>
        <dbReference type="PDB" id="1U0H"/>
    </source>
</evidence>
<evidence type="ECO:0007744" key="28">
    <source>
        <dbReference type="PDB" id="2GVD"/>
    </source>
</evidence>
<evidence type="ECO:0007744" key="29">
    <source>
        <dbReference type="PDB" id="2GVZ"/>
    </source>
</evidence>
<evidence type="ECO:0007744" key="30">
    <source>
        <dbReference type="PDB" id="3C14"/>
    </source>
</evidence>
<evidence type="ECO:0007744" key="31">
    <source>
        <dbReference type="PDB" id="3C15"/>
    </source>
</evidence>
<evidence type="ECO:0007744" key="32">
    <source>
        <dbReference type="PDB" id="3C16"/>
    </source>
</evidence>
<evidence type="ECO:0007744" key="33">
    <source>
        <dbReference type="PDB" id="3MAA"/>
    </source>
</evidence>
<evidence type="ECO:0007829" key="34">
    <source>
        <dbReference type="PDB" id="1AB8"/>
    </source>
</evidence>
<evidence type="ECO:0007829" key="35">
    <source>
        <dbReference type="PDB" id="1AZS"/>
    </source>
</evidence>